<feature type="chain" id="PRO_0000061529" description="Cytochrome b">
    <location>
        <begin position="1"/>
        <end position="176" status="greater than"/>
    </location>
</feature>
<feature type="transmembrane region" description="Helical" evidence="2">
    <location>
        <begin position="33"/>
        <end position="53"/>
    </location>
</feature>
<feature type="transmembrane region" description="Helical" evidence="2">
    <location>
        <begin position="77"/>
        <end position="98"/>
    </location>
</feature>
<feature type="transmembrane region" description="Helical" evidence="2">
    <location>
        <begin position="113"/>
        <end position="133"/>
    </location>
</feature>
<feature type="binding site" description="axial binding residue" evidence="2">
    <location>
        <position position="83"/>
    </location>
    <ligand>
        <name>heme b</name>
        <dbReference type="ChEBI" id="CHEBI:60344"/>
        <label>b562</label>
    </ligand>
    <ligandPart>
        <name>Fe</name>
        <dbReference type="ChEBI" id="CHEBI:18248"/>
    </ligandPart>
</feature>
<feature type="binding site" description="axial binding residue" evidence="2">
    <location>
        <position position="97"/>
    </location>
    <ligand>
        <name>heme b</name>
        <dbReference type="ChEBI" id="CHEBI:60344"/>
        <label>b566</label>
    </ligand>
    <ligandPart>
        <name>Fe</name>
        <dbReference type="ChEBI" id="CHEBI:18248"/>
    </ligandPart>
</feature>
<feature type="non-terminal residue">
    <location>
        <position position="176"/>
    </location>
</feature>
<organism>
    <name type="scientific">Sciurus carolinensis</name>
    <name type="common">Eastern gray squirrel</name>
    <dbReference type="NCBI Taxonomy" id="30640"/>
    <lineage>
        <taxon>Eukaryota</taxon>
        <taxon>Metazoa</taxon>
        <taxon>Chordata</taxon>
        <taxon>Craniata</taxon>
        <taxon>Vertebrata</taxon>
        <taxon>Euteleostomi</taxon>
        <taxon>Mammalia</taxon>
        <taxon>Eutheria</taxon>
        <taxon>Euarchontoglires</taxon>
        <taxon>Glires</taxon>
        <taxon>Rodentia</taxon>
        <taxon>Sciuromorpha</taxon>
        <taxon>Sciuridae</taxon>
        <taxon>Sciurinae</taxon>
        <taxon>Sciurini</taxon>
        <taxon>Sciurus</taxon>
    </lineage>
</organism>
<reference key="1">
    <citation type="submission" date="1996-01" db="EMBL/GenBank/DDBJ databases">
        <authorList>
            <person name="Sudman P.D."/>
            <person name="Hafner M.S."/>
        </authorList>
    </citation>
    <scope>NUCLEOTIDE SEQUENCE [GENOMIC DNA]</scope>
    <source>
        <strain>Isolate LSUMZ 27511</strain>
        <tissue>Kidney</tissue>
    </source>
</reference>
<accession>Q35805</accession>
<name>CYB_SCICA</name>
<dbReference type="EMBL" id="U46167">
    <property type="protein sequence ID" value="AAB38134.1"/>
    <property type="molecule type" value="Genomic_DNA"/>
</dbReference>
<dbReference type="SMR" id="Q35805"/>
<dbReference type="GO" id="GO:0005743">
    <property type="term" value="C:mitochondrial inner membrane"/>
    <property type="evidence" value="ECO:0007669"/>
    <property type="project" value="UniProtKB-SubCell"/>
</dbReference>
<dbReference type="GO" id="GO:0046872">
    <property type="term" value="F:metal ion binding"/>
    <property type="evidence" value="ECO:0007669"/>
    <property type="project" value="UniProtKB-KW"/>
</dbReference>
<dbReference type="GO" id="GO:0008121">
    <property type="term" value="F:ubiquinol-cytochrome-c reductase activity"/>
    <property type="evidence" value="ECO:0007669"/>
    <property type="project" value="TreeGrafter"/>
</dbReference>
<dbReference type="GO" id="GO:0006122">
    <property type="term" value="P:mitochondrial electron transport, ubiquinol to cytochrome c"/>
    <property type="evidence" value="ECO:0007669"/>
    <property type="project" value="TreeGrafter"/>
</dbReference>
<dbReference type="CDD" id="cd00284">
    <property type="entry name" value="Cytochrome_b_N"/>
    <property type="match status" value="1"/>
</dbReference>
<dbReference type="Gene3D" id="1.20.810.10">
    <property type="entry name" value="Cytochrome Bc1 Complex, Chain C"/>
    <property type="match status" value="1"/>
</dbReference>
<dbReference type="InterPro" id="IPR005797">
    <property type="entry name" value="Cyt_b/b6_N"/>
</dbReference>
<dbReference type="InterPro" id="IPR027387">
    <property type="entry name" value="Cytb/b6-like_sf"/>
</dbReference>
<dbReference type="InterPro" id="IPR048259">
    <property type="entry name" value="Cytochrome_b_N_euk/bac"/>
</dbReference>
<dbReference type="InterPro" id="IPR016174">
    <property type="entry name" value="Di-haem_cyt_TM"/>
</dbReference>
<dbReference type="PANTHER" id="PTHR19271">
    <property type="entry name" value="CYTOCHROME B"/>
    <property type="match status" value="1"/>
</dbReference>
<dbReference type="PANTHER" id="PTHR19271:SF16">
    <property type="entry name" value="CYTOCHROME B"/>
    <property type="match status" value="1"/>
</dbReference>
<dbReference type="Pfam" id="PF00033">
    <property type="entry name" value="Cytochrome_B"/>
    <property type="match status" value="1"/>
</dbReference>
<dbReference type="SUPFAM" id="SSF81342">
    <property type="entry name" value="Transmembrane di-heme cytochromes"/>
    <property type="match status" value="1"/>
</dbReference>
<dbReference type="PROSITE" id="PS51002">
    <property type="entry name" value="CYTB_NTER"/>
    <property type="match status" value="1"/>
</dbReference>
<geneLocation type="mitochondrion"/>
<comment type="function">
    <text evidence="2">Component of the ubiquinol-cytochrome c reductase complex (complex III or cytochrome b-c1 complex) that is part of the mitochondrial respiratory chain. The b-c1 complex mediates electron transfer from ubiquinol to cytochrome c. Contributes to the generation of a proton gradient across the mitochondrial membrane that is then used for ATP synthesis.</text>
</comment>
<comment type="cofactor">
    <cofactor evidence="2">
        <name>heme b</name>
        <dbReference type="ChEBI" id="CHEBI:60344"/>
    </cofactor>
    <text evidence="2">Binds 2 heme b groups non-covalently.</text>
</comment>
<comment type="subunit">
    <text evidence="2">The cytochrome bc1 complex contains 11 subunits: 3 respiratory subunits (MT-CYB, CYC1 and UQCRFS1), 2 core proteins (UQCRC1 and UQCRC2) and 6 low-molecular weight proteins (UQCRH/QCR6, UQCRB/QCR7, UQCRQ/QCR8, UQCR10/QCR9, UQCR11/QCR10 and a cleavage product of UQCRFS1). This cytochrome bc1 complex then forms a dimer.</text>
</comment>
<comment type="subcellular location">
    <subcellularLocation>
        <location evidence="2">Mitochondrion inner membrane</location>
        <topology evidence="2">Multi-pass membrane protein</topology>
    </subcellularLocation>
</comment>
<comment type="miscellaneous">
    <text evidence="1">Heme 1 (or BL or b562) is low-potential and absorbs at about 562 nm, and heme 2 (or BH or b566) is high-potential and absorbs at about 566 nm.</text>
</comment>
<comment type="similarity">
    <text evidence="3">Belongs to the cytochrome b family.</text>
</comment>
<comment type="caution">
    <text evidence="2">The full-length protein contains only eight transmembrane helices, not nine as predicted by bioinformatics tools.</text>
</comment>
<protein>
    <recommendedName>
        <fullName>Cytochrome b</fullName>
    </recommendedName>
    <alternativeName>
        <fullName>Complex III subunit 3</fullName>
    </alternativeName>
    <alternativeName>
        <fullName>Complex III subunit III</fullName>
    </alternativeName>
    <alternativeName>
        <fullName>Cytochrome b-c1 complex subunit 3</fullName>
    </alternativeName>
    <alternativeName>
        <fullName>Ubiquinol-cytochrome-c reductase complex cytochrome b subunit</fullName>
    </alternativeName>
</protein>
<evidence type="ECO:0000250" key="1"/>
<evidence type="ECO:0000250" key="2">
    <source>
        <dbReference type="UniProtKB" id="P00157"/>
    </source>
</evidence>
<evidence type="ECO:0000255" key="3">
    <source>
        <dbReference type="PROSITE-ProRule" id="PRU00968"/>
    </source>
</evidence>
<proteinExistence type="inferred from homology"/>
<gene>
    <name type="primary">MT-CYB</name>
    <name type="synonym">COB</name>
    <name type="synonym">CYTB</name>
    <name type="synonym">MTCYB</name>
</gene>
<keyword id="KW-0249">Electron transport</keyword>
<keyword id="KW-0349">Heme</keyword>
<keyword id="KW-0408">Iron</keyword>
<keyword id="KW-0472">Membrane</keyword>
<keyword id="KW-0479">Metal-binding</keyword>
<keyword id="KW-0496">Mitochondrion</keyword>
<keyword id="KW-0999">Mitochondrion inner membrane</keyword>
<keyword id="KW-0679">Respiratory chain</keyword>
<keyword id="KW-0812">Transmembrane</keyword>
<keyword id="KW-1133">Transmembrane helix</keyword>
<keyword id="KW-0813">Transport</keyword>
<keyword id="KW-0830">Ubiquinone</keyword>
<sequence>MTNIRKTHPLLKIVNHSFIDLPAPSNISAWWNFGSLLGLCLLIQILTGLFLAMHYTSDTMTAFSSVTHICRDVNYGWLIRYMHANGASLFFICLFLHVGRGLYYGSYTYFETWNIGVILLFAVMATAFMGYVLPWGQMSFWGATVITNHLSAIPYIGTTLVEWIWGGFSVDKATLT</sequence>